<organism>
    <name type="scientific">Mycobacterium phage D29</name>
    <name type="common">Mycobacteriophage D29</name>
    <dbReference type="NCBI Taxonomy" id="28369"/>
    <lineage>
        <taxon>Viruses</taxon>
        <taxon>Duplodnaviria</taxon>
        <taxon>Heunggongvirae</taxon>
        <taxon>Uroviricota</taxon>
        <taxon>Caudoviricetes</taxon>
        <taxon>Fromanvirus</taxon>
    </lineage>
</organism>
<name>VG55_BPMD2</name>
<feature type="chain" id="PRO_0000164784" description="Gene 55 protein">
    <location>
        <begin position="1"/>
        <end position="151"/>
    </location>
</feature>
<reference key="1">
    <citation type="journal article" date="1998" name="J. Mol. Biol.">
        <title>Genome structure of mycobacteriophage D29: implications for phage evolution.</title>
        <authorList>
            <person name="Ford M.E."/>
            <person name="Sarkis G.J."/>
            <person name="Belanger A.E."/>
            <person name="Hendrix R.W."/>
            <person name="Hatfull G.F."/>
        </authorList>
    </citation>
    <scope>NUCLEOTIDE SEQUENCE [LARGE SCALE GENOMIC DNA]</scope>
</reference>
<organismHost>
    <name type="scientific">Mycobacterium</name>
    <dbReference type="NCBI Taxonomy" id="1763"/>
</organismHost>
<accession>O64246</accession>
<gene>
    <name type="primary">55</name>
</gene>
<proteinExistence type="predicted"/>
<protein>
    <recommendedName>
        <fullName>Gene 55 protein</fullName>
    </recommendedName>
    <alternativeName>
        <fullName>Gp55</fullName>
    </alternativeName>
</protein>
<keyword id="KW-1185">Reference proteome</keyword>
<sequence length="151" mass="17351">MSESILEEAQRLIHGERNKNYGHPRENFKDIALLFSGYLEKEISDIDVANLMILMKIARVKGTGYHRDSFTDMAGYAGCVERIYEEPVEGEPRQWDTLADVPKDVKTVRSAGNAFWSRYPDYNERLWGHRDGFKLDHAKISEGPFVEVLGE</sequence>
<dbReference type="EMBL" id="AF022214">
    <property type="protein sequence ID" value="AAC18496.1"/>
    <property type="molecule type" value="Genomic_DNA"/>
</dbReference>
<dbReference type="PIR" id="E72806">
    <property type="entry name" value="E72806"/>
</dbReference>
<dbReference type="RefSeq" id="NP_046871.1">
    <property type="nucleotide sequence ID" value="NC_001900.1"/>
</dbReference>
<dbReference type="SMR" id="O64246"/>
<dbReference type="GeneID" id="1261607"/>
<dbReference type="KEGG" id="vg:1261607"/>
<dbReference type="OrthoDB" id="22240at10239"/>
<dbReference type="Proteomes" id="UP000002131">
    <property type="component" value="Segment"/>
</dbReference>
<dbReference type="InterPro" id="IPR045958">
    <property type="entry name" value="DUF6378"/>
</dbReference>
<dbReference type="Pfam" id="PF19905">
    <property type="entry name" value="DUF6378"/>
    <property type="match status" value="1"/>
</dbReference>